<sequence>MNEDKLESKWLFSLTESQKLYLLISLIINKKLPEAKFVYKLLDYTKGNWLSLLLRFLPETTDPECYIPYIDIDSHYGNIKASVNDIEPIVLPDEELCQLRLTNMKLWNCKLPSLKDEAEFYSLFSKKIVEETDLVDLAYQLTKNSQAPAEIQQWNSGTFTVFHKLSQFAAVPINLEEMEAATIRDVISLAFPVLDSKNCVFIMDEIITVFINNSSNDPNLISENWDFVWKKLLQLVKTDGLAVVHTLVLNWNTIEPKLFLKLAKVALASCYISDDSSLYSVSLARDITEAIQNKLNFSDVNFGDLLKKPHDFSADGLLSLQNDLTTPSSLSTSLLMEITKAIALLTQLKVPAPTFKTSVSISCSNFDSQIKYLENVLLNALGTIQSPDYKDWHDLYSYIERFKQLSLFFLNISEDAISVVFLKQMLQEKSFLALKQMRNEIGLKDIEPKVLIDCLKTSFYENFRAASNMNKNRGKLALACKVLDVFVDCEPTIDLRRRLNSLVNACSLIQPFKLILEPGKPLSPSLVEANLNPDKLIKTIFSQNPSAYTLYDDILALDIELHKAAGDFDYSQVFTELRRITEHMITLTIDVSLEKDDIEYAKQIVEDRLMTLAEASEDVKFFLYEIAYKIGKFPSNHPNAKVIRLDMLQIAIANAPRQKLDEVVSYWTDFQSNSKVLEENLNTTDVEFHSSKKIKDYEDLEDANFDEEWSKAADLMSDDPENQVLYEGNLNSSLSLNEDPSVSDENLTQKVTSKLTNGLGWVLGVPPRK</sequence>
<feature type="chain" id="PRO_0000234108" description="Protein transport protein sec39">
    <location>
        <begin position="1"/>
        <end position="769"/>
    </location>
</feature>
<comment type="function">
    <text evidence="2">Required for protein transport between the Golgi and the endoplasmic reticulum. May contribute to tethering of coatomer-coated retrograde transport vesicles to the ER membrane through interaction with and stabilization of the SNARE complex (By similarity).</text>
</comment>
<comment type="subunit">
    <text evidence="1">Component of a peripheral membrane protein complex consisting of dsl1, sec39 and tip20.</text>
</comment>
<comment type="subcellular location">
    <subcellularLocation>
        <location evidence="1">Endoplasmic reticulum membrane</location>
        <topology evidence="1">Peripheral membrane protein</topology>
    </subcellularLocation>
</comment>
<comment type="similarity">
    <text evidence="3">Belongs to the SEC39 family.</text>
</comment>
<accession>O14266</accession>
<keyword id="KW-0256">Endoplasmic reticulum</keyword>
<keyword id="KW-0931">ER-Golgi transport</keyword>
<keyword id="KW-0472">Membrane</keyword>
<keyword id="KW-0653">Protein transport</keyword>
<keyword id="KW-1185">Reference proteome</keyword>
<keyword id="KW-0813">Transport</keyword>
<proteinExistence type="inferred from homology"/>
<dbReference type="EMBL" id="CU329670">
    <property type="protein sequence ID" value="CAB16728.1"/>
    <property type="molecule type" value="Genomic_DNA"/>
</dbReference>
<dbReference type="PIR" id="T39089">
    <property type="entry name" value="T39089"/>
</dbReference>
<dbReference type="RefSeq" id="NP_593847.1">
    <property type="nucleotide sequence ID" value="NM_001019276.2"/>
</dbReference>
<dbReference type="STRING" id="284812.O14266"/>
<dbReference type="PaxDb" id="4896-SPAC7D4.11c.1"/>
<dbReference type="EnsemblFungi" id="SPAC7D4.11c.1">
    <property type="protein sequence ID" value="SPAC7D4.11c.1:pep"/>
    <property type="gene ID" value="SPAC7D4.11c"/>
</dbReference>
<dbReference type="GeneID" id="2541492"/>
<dbReference type="KEGG" id="spo:2541492"/>
<dbReference type="PomBase" id="SPAC7D4.11c">
    <property type="gene designation" value="sec39"/>
</dbReference>
<dbReference type="VEuPathDB" id="FungiDB:SPAC7D4.11c"/>
<dbReference type="eggNOG" id="ENOG502RS09">
    <property type="taxonomic scope" value="Eukaryota"/>
</dbReference>
<dbReference type="HOGENOM" id="CLU_375595_0_0_1"/>
<dbReference type="InParanoid" id="O14266"/>
<dbReference type="OMA" id="GMKRAYD"/>
<dbReference type="PRO" id="PR:O14266"/>
<dbReference type="Proteomes" id="UP000002485">
    <property type="component" value="Chromosome I"/>
</dbReference>
<dbReference type="GO" id="GO:0070939">
    <property type="term" value="C:Dsl1/NZR complex"/>
    <property type="evidence" value="ECO:0000266"/>
    <property type="project" value="PomBase"/>
</dbReference>
<dbReference type="GO" id="GO:0005789">
    <property type="term" value="C:endoplasmic reticulum membrane"/>
    <property type="evidence" value="ECO:0000266"/>
    <property type="project" value="PomBase"/>
</dbReference>
<dbReference type="GO" id="GO:0005634">
    <property type="term" value="C:nucleus"/>
    <property type="evidence" value="ECO:0007005"/>
    <property type="project" value="PomBase"/>
</dbReference>
<dbReference type="GO" id="GO:0006886">
    <property type="term" value="P:intracellular protein transport"/>
    <property type="evidence" value="ECO:0000303"/>
    <property type="project" value="PomBase"/>
</dbReference>
<dbReference type="GO" id="GO:0006890">
    <property type="term" value="P:retrograde vesicle-mediated transport, Golgi to endoplasmic reticulum"/>
    <property type="evidence" value="ECO:0000266"/>
    <property type="project" value="PomBase"/>
</dbReference>
<dbReference type="InterPro" id="IPR013244">
    <property type="entry name" value="Sec39_domain"/>
</dbReference>
<dbReference type="PANTHER" id="PTHR40787:SF3">
    <property type="entry name" value="PROTEIN TRANSPORT PROTEIN SEC39"/>
    <property type="match status" value="1"/>
</dbReference>
<dbReference type="PANTHER" id="PTHR40787">
    <property type="entry name" value="SECRETED PROTEIN"/>
    <property type="match status" value="1"/>
</dbReference>
<dbReference type="Pfam" id="PF08314">
    <property type="entry name" value="Sec39"/>
    <property type="match status" value="1"/>
</dbReference>
<name>SEC39_SCHPO</name>
<gene>
    <name evidence="2" type="primary">sec39</name>
    <name type="ORF">SPAC7D4.11c</name>
</gene>
<evidence type="ECO:0000250" key="1"/>
<evidence type="ECO:0000250" key="2">
    <source>
        <dbReference type="UniProtKB" id="Q12745"/>
    </source>
</evidence>
<evidence type="ECO:0000305" key="3"/>
<evidence type="ECO:0000312" key="4">
    <source>
        <dbReference type="EMBL" id="CAB16728.1"/>
    </source>
</evidence>
<protein>
    <recommendedName>
        <fullName>Protein transport protein sec39</fullName>
    </recommendedName>
</protein>
<reference evidence="4" key="1">
    <citation type="journal article" date="2002" name="Nature">
        <title>The genome sequence of Schizosaccharomyces pombe.</title>
        <authorList>
            <person name="Wood V."/>
            <person name="Gwilliam R."/>
            <person name="Rajandream M.A."/>
            <person name="Lyne M.H."/>
            <person name="Lyne R."/>
            <person name="Stewart A."/>
            <person name="Sgouros J.G."/>
            <person name="Peat N."/>
            <person name="Hayles J."/>
            <person name="Baker S.G."/>
            <person name="Basham D."/>
            <person name="Bowman S."/>
            <person name="Brooks K."/>
            <person name="Brown D."/>
            <person name="Brown S."/>
            <person name="Chillingworth T."/>
            <person name="Churcher C.M."/>
            <person name="Collins M."/>
            <person name="Connor R."/>
            <person name="Cronin A."/>
            <person name="Davis P."/>
            <person name="Feltwell T."/>
            <person name="Fraser A."/>
            <person name="Gentles S."/>
            <person name="Goble A."/>
            <person name="Hamlin N."/>
            <person name="Harris D.E."/>
            <person name="Hidalgo J."/>
            <person name="Hodgson G."/>
            <person name="Holroyd S."/>
            <person name="Hornsby T."/>
            <person name="Howarth S."/>
            <person name="Huckle E.J."/>
            <person name="Hunt S."/>
            <person name="Jagels K."/>
            <person name="James K.D."/>
            <person name="Jones L."/>
            <person name="Jones M."/>
            <person name="Leather S."/>
            <person name="McDonald S."/>
            <person name="McLean J."/>
            <person name="Mooney P."/>
            <person name="Moule S."/>
            <person name="Mungall K.L."/>
            <person name="Murphy L.D."/>
            <person name="Niblett D."/>
            <person name="Odell C."/>
            <person name="Oliver K."/>
            <person name="O'Neil S."/>
            <person name="Pearson D."/>
            <person name="Quail M.A."/>
            <person name="Rabbinowitsch E."/>
            <person name="Rutherford K.M."/>
            <person name="Rutter S."/>
            <person name="Saunders D."/>
            <person name="Seeger K."/>
            <person name="Sharp S."/>
            <person name="Skelton J."/>
            <person name="Simmonds M.N."/>
            <person name="Squares R."/>
            <person name="Squares S."/>
            <person name="Stevens K."/>
            <person name="Taylor K."/>
            <person name="Taylor R.G."/>
            <person name="Tivey A."/>
            <person name="Walsh S.V."/>
            <person name="Warren T."/>
            <person name="Whitehead S."/>
            <person name="Woodward J.R."/>
            <person name="Volckaert G."/>
            <person name="Aert R."/>
            <person name="Robben J."/>
            <person name="Grymonprez B."/>
            <person name="Weltjens I."/>
            <person name="Vanstreels E."/>
            <person name="Rieger M."/>
            <person name="Schaefer M."/>
            <person name="Mueller-Auer S."/>
            <person name="Gabel C."/>
            <person name="Fuchs M."/>
            <person name="Duesterhoeft A."/>
            <person name="Fritzc C."/>
            <person name="Holzer E."/>
            <person name="Moestl D."/>
            <person name="Hilbert H."/>
            <person name="Borzym K."/>
            <person name="Langer I."/>
            <person name="Beck A."/>
            <person name="Lehrach H."/>
            <person name="Reinhardt R."/>
            <person name="Pohl T.M."/>
            <person name="Eger P."/>
            <person name="Zimmermann W."/>
            <person name="Wedler H."/>
            <person name="Wambutt R."/>
            <person name="Purnelle B."/>
            <person name="Goffeau A."/>
            <person name="Cadieu E."/>
            <person name="Dreano S."/>
            <person name="Gloux S."/>
            <person name="Lelaure V."/>
            <person name="Mottier S."/>
            <person name="Galibert F."/>
            <person name="Aves S.J."/>
            <person name="Xiang Z."/>
            <person name="Hunt C."/>
            <person name="Moore K."/>
            <person name="Hurst S.M."/>
            <person name="Lucas M."/>
            <person name="Rochet M."/>
            <person name="Gaillardin C."/>
            <person name="Tallada V.A."/>
            <person name="Garzon A."/>
            <person name="Thode G."/>
            <person name="Daga R.R."/>
            <person name="Cruzado L."/>
            <person name="Jimenez J."/>
            <person name="Sanchez M."/>
            <person name="del Rey F."/>
            <person name="Benito J."/>
            <person name="Dominguez A."/>
            <person name="Revuelta J.L."/>
            <person name="Moreno S."/>
            <person name="Armstrong J."/>
            <person name="Forsburg S.L."/>
            <person name="Cerutti L."/>
            <person name="Lowe T."/>
            <person name="McCombie W.R."/>
            <person name="Paulsen I."/>
            <person name="Potashkin J."/>
            <person name="Shpakovski G.V."/>
            <person name="Ussery D."/>
            <person name="Barrell B.G."/>
            <person name="Nurse P."/>
        </authorList>
    </citation>
    <scope>NUCLEOTIDE SEQUENCE [LARGE SCALE GENOMIC DNA]</scope>
    <source>
        <strain>972 / ATCC 24843</strain>
    </source>
</reference>
<organism>
    <name type="scientific">Schizosaccharomyces pombe (strain 972 / ATCC 24843)</name>
    <name type="common">Fission yeast</name>
    <dbReference type="NCBI Taxonomy" id="284812"/>
    <lineage>
        <taxon>Eukaryota</taxon>
        <taxon>Fungi</taxon>
        <taxon>Dikarya</taxon>
        <taxon>Ascomycota</taxon>
        <taxon>Taphrinomycotina</taxon>
        <taxon>Schizosaccharomycetes</taxon>
        <taxon>Schizosaccharomycetales</taxon>
        <taxon>Schizosaccharomycetaceae</taxon>
        <taxon>Schizosaccharomyces</taxon>
    </lineage>
</organism>